<protein>
    <recommendedName>
        <fullName evidence="2">D-alanine--D-alanine ligase</fullName>
        <ecNumber evidence="2">6.3.2.4</ecNumber>
    </recommendedName>
    <alternativeName>
        <fullName evidence="2">D-Ala-D-Ala ligase</fullName>
    </alternativeName>
    <alternativeName>
        <fullName evidence="2">D-alanylalanine synthetase</fullName>
    </alternativeName>
</protein>
<keyword id="KW-0067">ATP-binding</keyword>
<keyword id="KW-0133">Cell shape</keyword>
<keyword id="KW-0961">Cell wall biogenesis/degradation</keyword>
<keyword id="KW-0963">Cytoplasm</keyword>
<keyword id="KW-0436">Ligase</keyword>
<keyword id="KW-0460">Magnesium</keyword>
<keyword id="KW-0464">Manganese</keyword>
<keyword id="KW-0479">Metal-binding</keyword>
<keyword id="KW-0547">Nucleotide-binding</keyword>
<keyword id="KW-0573">Peptidoglycan synthesis</keyword>
<keyword id="KW-1185">Reference proteome</keyword>
<organism>
    <name type="scientific">Nostoc punctiforme (strain ATCC 29133 / PCC 73102)</name>
    <dbReference type="NCBI Taxonomy" id="63737"/>
    <lineage>
        <taxon>Bacteria</taxon>
        <taxon>Bacillati</taxon>
        <taxon>Cyanobacteriota</taxon>
        <taxon>Cyanophyceae</taxon>
        <taxon>Nostocales</taxon>
        <taxon>Nostocaceae</taxon>
        <taxon>Nostoc</taxon>
    </lineage>
</organism>
<comment type="function">
    <text evidence="2">Cell wall formation.</text>
</comment>
<comment type="catalytic activity">
    <reaction evidence="2">
        <text>2 D-alanine + ATP = D-alanyl-D-alanine + ADP + phosphate + H(+)</text>
        <dbReference type="Rhea" id="RHEA:11224"/>
        <dbReference type="ChEBI" id="CHEBI:15378"/>
        <dbReference type="ChEBI" id="CHEBI:30616"/>
        <dbReference type="ChEBI" id="CHEBI:43474"/>
        <dbReference type="ChEBI" id="CHEBI:57416"/>
        <dbReference type="ChEBI" id="CHEBI:57822"/>
        <dbReference type="ChEBI" id="CHEBI:456216"/>
        <dbReference type="EC" id="6.3.2.4"/>
    </reaction>
</comment>
<comment type="cofactor">
    <cofactor evidence="1">
        <name>Mg(2+)</name>
        <dbReference type="ChEBI" id="CHEBI:18420"/>
    </cofactor>
    <cofactor evidence="1">
        <name>Mn(2+)</name>
        <dbReference type="ChEBI" id="CHEBI:29035"/>
    </cofactor>
    <text evidence="1">Binds 2 magnesium or manganese ions per subunit.</text>
</comment>
<comment type="pathway">
    <text evidence="2">Cell wall biogenesis; peptidoglycan biosynthesis.</text>
</comment>
<comment type="subcellular location">
    <subcellularLocation>
        <location evidence="2">Cytoplasm</location>
    </subcellularLocation>
</comment>
<comment type="similarity">
    <text evidence="2">Belongs to the D-alanine--D-alanine ligase family.</text>
</comment>
<dbReference type="EC" id="6.3.2.4" evidence="2"/>
<dbReference type="EMBL" id="CP001037">
    <property type="protein sequence ID" value="ACC84886.1"/>
    <property type="molecule type" value="Genomic_DNA"/>
</dbReference>
<dbReference type="RefSeq" id="WP_012412817.1">
    <property type="nucleotide sequence ID" value="NC_010628.1"/>
</dbReference>
<dbReference type="SMR" id="B2J0J6"/>
<dbReference type="STRING" id="63737.Npun_R6628"/>
<dbReference type="EnsemblBacteria" id="ACC84886">
    <property type="protein sequence ID" value="ACC84886"/>
    <property type="gene ID" value="Npun_R6628"/>
</dbReference>
<dbReference type="KEGG" id="npu:Npun_R6628"/>
<dbReference type="eggNOG" id="COG1181">
    <property type="taxonomic scope" value="Bacteria"/>
</dbReference>
<dbReference type="HOGENOM" id="CLU_039268_0_0_3"/>
<dbReference type="OrthoDB" id="9813261at2"/>
<dbReference type="PhylomeDB" id="B2J0J6"/>
<dbReference type="UniPathway" id="UPA00219"/>
<dbReference type="Proteomes" id="UP000001191">
    <property type="component" value="Chromosome"/>
</dbReference>
<dbReference type="GO" id="GO:0005829">
    <property type="term" value="C:cytosol"/>
    <property type="evidence" value="ECO:0007669"/>
    <property type="project" value="TreeGrafter"/>
</dbReference>
<dbReference type="GO" id="GO:0005524">
    <property type="term" value="F:ATP binding"/>
    <property type="evidence" value="ECO:0007669"/>
    <property type="project" value="UniProtKB-KW"/>
</dbReference>
<dbReference type="GO" id="GO:0008716">
    <property type="term" value="F:D-alanine-D-alanine ligase activity"/>
    <property type="evidence" value="ECO:0007669"/>
    <property type="project" value="UniProtKB-UniRule"/>
</dbReference>
<dbReference type="GO" id="GO:0046872">
    <property type="term" value="F:metal ion binding"/>
    <property type="evidence" value="ECO:0007669"/>
    <property type="project" value="UniProtKB-KW"/>
</dbReference>
<dbReference type="GO" id="GO:0071555">
    <property type="term" value="P:cell wall organization"/>
    <property type="evidence" value="ECO:0007669"/>
    <property type="project" value="UniProtKB-KW"/>
</dbReference>
<dbReference type="GO" id="GO:0009252">
    <property type="term" value="P:peptidoglycan biosynthetic process"/>
    <property type="evidence" value="ECO:0007669"/>
    <property type="project" value="UniProtKB-UniRule"/>
</dbReference>
<dbReference type="GO" id="GO:0008360">
    <property type="term" value="P:regulation of cell shape"/>
    <property type="evidence" value="ECO:0007669"/>
    <property type="project" value="UniProtKB-KW"/>
</dbReference>
<dbReference type="FunFam" id="3.30.1490.20:FF:000007">
    <property type="entry name" value="D-alanine--D-alanine ligase"/>
    <property type="match status" value="1"/>
</dbReference>
<dbReference type="FunFam" id="3.30.470.20:FF:000008">
    <property type="entry name" value="D-alanine--D-alanine ligase"/>
    <property type="match status" value="1"/>
</dbReference>
<dbReference type="Gene3D" id="3.40.50.20">
    <property type="match status" value="1"/>
</dbReference>
<dbReference type="Gene3D" id="3.30.1490.20">
    <property type="entry name" value="ATP-grasp fold, A domain"/>
    <property type="match status" value="1"/>
</dbReference>
<dbReference type="Gene3D" id="3.30.470.20">
    <property type="entry name" value="ATP-grasp fold, B domain"/>
    <property type="match status" value="1"/>
</dbReference>
<dbReference type="HAMAP" id="MF_00047">
    <property type="entry name" value="Dala_Dala_lig"/>
    <property type="match status" value="1"/>
</dbReference>
<dbReference type="InterPro" id="IPR011761">
    <property type="entry name" value="ATP-grasp"/>
</dbReference>
<dbReference type="InterPro" id="IPR013815">
    <property type="entry name" value="ATP_grasp_subdomain_1"/>
</dbReference>
<dbReference type="InterPro" id="IPR000291">
    <property type="entry name" value="D-Ala_lig_Van_CS"/>
</dbReference>
<dbReference type="InterPro" id="IPR005905">
    <property type="entry name" value="D_ala_D_ala"/>
</dbReference>
<dbReference type="InterPro" id="IPR011095">
    <property type="entry name" value="Dala_Dala_lig_C"/>
</dbReference>
<dbReference type="InterPro" id="IPR011127">
    <property type="entry name" value="Dala_Dala_lig_N"/>
</dbReference>
<dbReference type="InterPro" id="IPR016185">
    <property type="entry name" value="PreATP-grasp_dom_sf"/>
</dbReference>
<dbReference type="NCBIfam" id="TIGR01205">
    <property type="entry name" value="D_ala_D_alaTIGR"/>
    <property type="match status" value="1"/>
</dbReference>
<dbReference type="NCBIfam" id="NF002378">
    <property type="entry name" value="PRK01372.1"/>
    <property type="match status" value="1"/>
</dbReference>
<dbReference type="NCBIfam" id="NF002528">
    <property type="entry name" value="PRK01966.1-4"/>
    <property type="match status" value="1"/>
</dbReference>
<dbReference type="PANTHER" id="PTHR23132">
    <property type="entry name" value="D-ALANINE--D-ALANINE LIGASE"/>
    <property type="match status" value="1"/>
</dbReference>
<dbReference type="PANTHER" id="PTHR23132:SF25">
    <property type="entry name" value="D-ALANINE--D-ALANINE LIGASE A"/>
    <property type="match status" value="1"/>
</dbReference>
<dbReference type="Pfam" id="PF07478">
    <property type="entry name" value="Dala_Dala_lig_C"/>
    <property type="match status" value="1"/>
</dbReference>
<dbReference type="Pfam" id="PF01820">
    <property type="entry name" value="Dala_Dala_lig_N"/>
    <property type="match status" value="1"/>
</dbReference>
<dbReference type="PIRSF" id="PIRSF039102">
    <property type="entry name" value="Ddl/VanB"/>
    <property type="match status" value="1"/>
</dbReference>
<dbReference type="SUPFAM" id="SSF56059">
    <property type="entry name" value="Glutathione synthetase ATP-binding domain-like"/>
    <property type="match status" value="1"/>
</dbReference>
<dbReference type="SUPFAM" id="SSF52440">
    <property type="entry name" value="PreATP-grasp domain"/>
    <property type="match status" value="1"/>
</dbReference>
<dbReference type="PROSITE" id="PS50975">
    <property type="entry name" value="ATP_GRASP"/>
    <property type="match status" value="1"/>
</dbReference>
<dbReference type="PROSITE" id="PS00843">
    <property type="entry name" value="DALA_DALA_LIGASE_1"/>
    <property type="match status" value="1"/>
</dbReference>
<dbReference type="PROSITE" id="PS00844">
    <property type="entry name" value="DALA_DALA_LIGASE_2"/>
    <property type="match status" value="1"/>
</dbReference>
<accession>B2J0J6</accession>
<feature type="chain" id="PRO_1000091198" description="D-alanine--D-alanine ligase">
    <location>
        <begin position="1"/>
        <end position="366"/>
    </location>
</feature>
<feature type="domain" description="ATP-grasp" evidence="2">
    <location>
        <begin position="148"/>
        <end position="357"/>
    </location>
</feature>
<feature type="binding site" evidence="2">
    <location>
        <begin position="184"/>
        <end position="239"/>
    </location>
    <ligand>
        <name>ATP</name>
        <dbReference type="ChEBI" id="CHEBI:30616"/>
    </ligand>
</feature>
<feature type="binding site" evidence="2">
    <location>
        <position position="310"/>
    </location>
    <ligand>
        <name>Mg(2+)</name>
        <dbReference type="ChEBI" id="CHEBI:18420"/>
        <label>1</label>
    </ligand>
</feature>
<feature type="binding site" evidence="2">
    <location>
        <position position="324"/>
    </location>
    <ligand>
        <name>Mg(2+)</name>
        <dbReference type="ChEBI" id="CHEBI:18420"/>
        <label>1</label>
    </ligand>
</feature>
<feature type="binding site" evidence="2">
    <location>
        <position position="324"/>
    </location>
    <ligand>
        <name>Mg(2+)</name>
        <dbReference type="ChEBI" id="CHEBI:18420"/>
        <label>2</label>
    </ligand>
</feature>
<feature type="binding site" evidence="2">
    <location>
        <position position="326"/>
    </location>
    <ligand>
        <name>Mg(2+)</name>
        <dbReference type="ChEBI" id="CHEBI:18420"/>
        <label>2</label>
    </ligand>
</feature>
<evidence type="ECO:0000250" key="1"/>
<evidence type="ECO:0000255" key="2">
    <source>
        <dbReference type="HAMAP-Rule" id="MF_00047"/>
    </source>
</evidence>
<reference key="1">
    <citation type="journal article" date="2013" name="Plant Physiol.">
        <title>A Nostoc punctiforme Sugar Transporter Necessary to Establish a Cyanobacterium-Plant Symbiosis.</title>
        <authorList>
            <person name="Ekman M."/>
            <person name="Picossi S."/>
            <person name="Campbell E.L."/>
            <person name="Meeks J.C."/>
            <person name="Flores E."/>
        </authorList>
    </citation>
    <scope>NUCLEOTIDE SEQUENCE [LARGE SCALE GENOMIC DNA]</scope>
    <source>
        <strain>ATCC 29133 / PCC 73102</strain>
    </source>
</reference>
<name>DDL_NOSP7</name>
<gene>
    <name evidence="2" type="primary">ddl</name>
    <name type="ordered locus">Npun_R6628</name>
</gene>
<proteinExistence type="inferred from homology"/>
<sequence length="366" mass="39781">MTKLRVGLLFGGRSGEHEVSIKSARAIAKALSVDENASKYEILPFYIQKDGRWLAGEAPQKVLETGSPLLEAEQSTSEGNLTSNPQVQTLSKWESPSQVAQVDIWFPVLHGPNGEDGTIQGLLTLMQVPFVGSGVLGSAMGMDKIAMKMTFEQAGLAQVKYKAITRAQVWSNPCVFPKLCDEIEAALGYPAFVKPANLGSSVGIAKVRSRQELEAALDNAASYDRRLVVEAGVVAREVECAVLGNDQPQASVVGEISYDSDFYDYETKYTEDRADLLIPAPIPDAIARQIQDMALQAFAAVDAAGLARVDFFYVEATQEVLINEINTLPGFTATSMYPQLWAHSGVSFPELVDRLIQLALERYSPS</sequence>